<comment type="function">
    <text evidence="1">RNaseP catalyzes the removal of the 5'-leader sequence from pre-tRNA to produce the mature 5'-terminus. It can also cleave other RNA substrates such as 4.5S RNA. The protein component plays an auxiliary but essential role in vivo by binding to the 5'-leader sequence and broadening the substrate specificity of the ribozyme.</text>
</comment>
<comment type="catalytic activity">
    <reaction evidence="1">
        <text>Endonucleolytic cleavage of RNA, removing 5'-extranucleotides from tRNA precursor.</text>
        <dbReference type="EC" id="3.1.26.5"/>
    </reaction>
</comment>
<comment type="subunit">
    <text evidence="1">Consists of a catalytic RNA component (M1 or rnpB) and a protein subunit.</text>
</comment>
<comment type="similarity">
    <text evidence="1">Belongs to the RnpA family.</text>
</comment>
<organism>
    <name type="scientific">Shewanella baltica (strain OS195)</name>
    <dbReference type="NCBI Taxonomy" id="399599"/>
    <lineage>
        <taxon>Bacteria</taxon>
        <taxon>Pseudomonadati</taxon>
        <taxon>Pseudomonadota</taxon>
        <taxon>Gammaproteobacteria</taxon>
        <taxon>Alteromonadales</taxon>
        <taxon>Shewanellaceae</taxon>
        <taxon>Shewanella</taxon>
    </lineage>
</organism>
<sequence>MTSYTFSRELRLLTPAQFKSVFSNPIKASSAEITLLAIPNTEQHPRMGLTVAKRFVKRANQRNRIKRVIRDSFRLNQHDIPHLDIVVLVRNGVMEMENAEINKLIEKLWRKLSRRYNG</sequence>
<proteinExistence type="inferred from homology"/>
<dbReference type="EC" id="3.1.26.5" evidence="1"/>
<dbReference type="EMBL" id="CP000891">
    <property type="protein sequence ID" value="ABX51680.1"/>
    <property type="molecule type" value="Genomic_DNA"/>
</dbReference>
<dbReference type="RefSeq" id="WP_006083828.1">
    <property type="nucleotide sequence ID" value="NC_009997.1"/>
</dbReference>
<dbReference type="SMR" id="A9KX22"/>
<dbReference type="GeneID" id="11774477"/>
<dbReference type="KEGG" id="sbn:Sbal195_4523"/>
<dbReference type="HOGENOM" id="CLU_117179_11_0_6"/>
<dbReference type="Proteomes" id="UP000000770">
    <property type="component" value="Chromosome"/>
</dbReference>
<dbReference type="GO" id="GO:0030677">
    <property type="term" value="C:ribonuclease P complex"/>
    <property type="evidence" value="ECO:0007669"/>
    <property type="project" value="TreeGrafter"/>
</dbReference>
<dbReference type="GO" id="GO:0042781">
    <property type="term" value="F:3'-tRNA processing endoribonuclease activity"/>
    <property type="evidence" value="ECO:0007669"/>
    <property type="project" value="TreeGrafter"/>
</dbReference>
<dbReference type="GO" id="GO:0004526">
    <property type="term" value="F:ribonuclease P activity"/>
    <property type="evidence" value="ECO:0007669"/>
    <property type="project" value="UniProtKB-UniRule"/>
</dbReference>
<dbReference type="GO" id="GO:0000049">
    <property type="term" value="F:tRNA binding"/>
    <property type="evidence" value="ECO:0007669"/>
    <property type="project" value="UniProtKB-UniRule"/>
</dbReference>
<dbReference type="GO" id="GO:0001682">
    <property type="term" value="P:tRNA 5'-leader removal"/>
    <property type="evidence" value="ECO:0007669"/>
    <property type="project" value="UniProtKB-UniRule"/>
</dbReference>
<dbReference type="FunFam" id="3.30.230.10:FF:000016">
    <property type="entry name" value="Ribonuclease P protein component"/>
    <property type="match status" value="1"/>
</dbReference>
<dbReference type="Gene3D" id="3.30.230.10">
    <property type="match status" value="1"/>
</dbReference>
<dbReference type="HAMAP" id="MF_00227">
    <property type="entry name" value="RNase_P"/>
    <property type="match status" value="1"/>
</dbReference>
<dbReference type="InterPro" id="IPR020568">
    <property type="entry name" value="Ribosomal_Su5_D2-typ_SF"/>
</dbReference>
<dbReference type="InterPro" id="IPR014721">
    <property type="entry name" value="Ribsml_uS5_D2-typ_fold_subgr"/>
</dbReference>
<dbReference type="InterPro" id="IPR000100">
    <property type="entry name" value="RNase_P"/>
</dbReference>
<dbReference type="InterPro" id="IPR020539">
    <property type="entry name" value="RNase_P_CS"/>
</dbReference>
<dbReference type="NCBIfam" id="TIGR00188">
    <property type="entry name" value="rnpA"/>
    <property type="match status" value="1"/>
</dbReference>
<dbReference type="PANTHER" id="PTHR33992">
    <property type="entry name" value="RIBONUCLEASE P PROTEIN COMPONENT"/>
    <property type="match status" value="1"/>
</dbReference>
<dbReference type="PANTHER" id="PTHR33992:SF1">
    <property type="entry name" value="RIBONUCLEASE P PROTEIN COMPONENT"/>
    <property type="match status" value="1"/>
</dbReference>
<dbReference type="Pfam" id="PF00825">
    <property type="entry name" value="Ribonuclease_P"/>
    <property type="match status" value="1"/>
</dbReference>
<dbReference type="SUPFAM" id="SSF54211">
    <property type="entry name" value="Ribosomal protein S5 domain 2-like"/>
    <property type="match status" value="1"/>
</dbReference>
<dbReference type="PROSITE" id="PS00648">
    <property type="entry name" value="RIBONUCLEASE_P"/>
    <property type="match status" value="1"/>
</dbReference>
<keyword id="KW-0255">Endonuclease</keyword>
<keyword id="KW-0378">Hydrolase</keyword>
<keyword id="KW-0540">Nuclease</keyword>
<keyword id="KW-0694">RNA-binding</keyword>
<keyword id="KW-0819">tRNA processing</keyword>
<evidence type="ECO:0000255" key="1">
    <source>
        <dbReference type="HAMAP-Rule" id="MF_00227"/>
    </source>
</evidence>
<reference key="1">
    <citation type="submission" date="2007-11" db="EMBL/GenBank/DDBJ databases">
        <title>Complete sequence of chromosome of Shewanella baltica OS195.</title>
        <authorList>
            <consortium name="US DOE Joint Genome Institute"/>
            <person name="Copeland A."/>
            <person name="Lucas S."/>
            <person name="Lapidus A."/>
            <person name="Barry K."/>
            <person name="Glavina del Rio T."/>
            <person name="Dalin E."/>
            <person name="Tice H."/>
            <person name="Pitluck S."/>
            <person name="Chain P."/>
            <person name="Malfatti S."/>
            <person name="Shin M."/>
            <person name="Vergez L."/>
            <person name="Schmutz J."/>
            <person name="Larimer F."/>
            <person name="Land M."/>
            <person name="Hauser L."/>
            <person name="Kyrpides N."/>
            <person name="Kim E."/>
            <person name="Brettar I."/>
            <person name="Rodrigues J."/>
            <person name="Konstantinidis K."/>
            <person name="Klappenbach J."/>
            <person name="Hofle M."/>
            <person name="Tiedje J."/>
            <person name="Richardson P."/>
        </authorList>
    </citation>
    <scope>NUCLEOTIDE SEQUENCE [LARGE SCALE GENOMIC DNA]</scope>
    <source>
        <strain>OS195</strain>
    </source>
</reference>
<accession>A9KX22</accession>
<feature type="chain" id="PRO_1000078208" description="Ribonuclease P protein component">
    <location>
        <begin position="1"/>
        <end position="118"/>
    </location>
</feature>
<gene>
    <name evidence="1" type="primary">rnpA</name>
    <name type="ordered locus">Sbal195_4523</name>
</gene>
<name>RNPA_SHEB9</name>
<protein>
    <recommendedName>
        <fullName evidence="1">Ribonuclease P protein component</fullName>
        <shortName evidence="1">RNase P protein</shortName>
        <shortName evidence="1">RNaseP protein</shortName>
        <ecNumber evidence="1">3.1.26.5</ecNumber>
    </recommendedName>
    <alternativeName>
        <fullName evidence="1">Protein C5</fullName>
    </alternativeName>
</protein>